<sequence length="72" mass="8289">MAAKMKKGSLVRVIRAQLENSLEAQASDRRLPDYLFHSKGEVLDLNEEYALVRFYVPTPNVWLRLDQIEALA</sequence>
<organism>
    <name type="scientific">Synechocystis sp. (strain ATCC 27184 / PCC 6803 / Kazusa)</name>
    <dbReference type="NCBI Taxonomy" id="1111708"/>
    <lineage>
        <taxon>Bacteria</taxon>
        <taxon>Bacillati</taxon>
        <taxon>Cyanobacteriota</taxon>
        <taxon>Cyanophyceae</taxon>
        <taxon>Synechococcales</taxon>
        <taxon>Merismopediaceae</taxon>
        <taxon>Synechocystis</taxon>
    </lineage>
</organism>
<dbReference type="EC" id="7.1.1.-"/>
<dbReference type="EMBL" id="BA000022">
    <property type="protein sequence ID" value="BAA10471.1"/>
    <property type="molecule type" value="Genomic_DNA"/>
</dbReference>
<dbReference type="PIR" id="S75736">
    <property type="entry name" value="S75736"/>
</dbReference>
<dbReference type="SMR" id="P74771"/>
<dbReference type="IntAct" id="P74771">
    <property type="interactions" value="1"/>
</dbReference>
<dbReference type="STRING" id="1148.gene:10499974"/>
<dbReference type="PaxDb" id="1148-1673312"/>
<dbReference type="EnsemblBacteria" id="BAA10471">
    <property type="protein sequence ID" value="BAA10471"/>
    <property type="gene ID" value="BAA10471"/>
</dbReference>
<dbReference type="KEGG" id="syn:ssl1690"/>
<dbReference type="eggNOG" id="ENOG5032XZT">
    <property type="taxonomic scope" value="Bacteria"/>
</dbReference>
<dbReference type="InParanoid" id="P74771"/>
<dbReference type="Proteomes" id="UP000001425">
    <property type="component" value="Chromosome"/>
</dbReference>
<dbReference type="GO" id="GO:0031676">
    <property type="term" value="C:plasma membrane-derived thylakoid membrane"/>
    <property type="evidence" value="ECO:0007669"/>
    <property type="project" value="UniProtKB-SubCell"/>
</dbReference>
<dbReference type="GO" id="GO:0016655">
    <property type="term" value="F:oxidoreductase activity, acting on NAD(P)H, quinone or similar compound as acceptor"/>
    <property type="evidence" value="ECO:0007669"/>
    <property type="project" value="UniProtKB-UniRule"/>
</dbReference>
<dbReference type="GO" id="GO:0048038">
    <property type="term" value="F:quinone binding"/>
    <property type="evidence" value="ECO:0007669"/>
    <property type="project" value="UniProtKB-KW"/>
</dbReference>
<dbReference type="HAMAP" id="MF_01354">
    <property type="entry name" value="NDH1_NDH1O"/>
    <property type="match status" value="1"/>
</dbReference>
<dbReference type="InterPro" id="IPR020905">
    <property type="entry name" value="NdhO"/>
</dbReference>
<dbReference type="Pfam" id="PF11910">
    <property type="entry name" value="NdhO"/>
    <property type="match status" value="1"/>
</dbReference>
<reference key="1">
    <citation type="journal article" date="1996" name="DNA Res.">
        <title>Sequence analysis of the genome of the unicellular cyanobacterium Synechocystis sp. strain PCC6803. II. Sequence determination of the entire genome and assignment of potential protein-coding regions.</title>
        <authorList>
            <person name="Kaneko T."/>
            <person name="Sato S."/>
            <person name="Kotani H."/>
            <person name="Tanaka A."/>
            <person name="Asamizu E."/>
            <person name="Nakamura Y."/>
            <person name="Miyajima N."/>
            <person name="Hirosawa M."/>
            <person name="Sugiura M."/>
            <person name="Sasamoto S."/>
            <person name="Kimura T."/>
            <person name="Hosouchi T."/>
            <person name="Matsuno A."/>
            <person name="Muraki A."/>
            <person name="Nakazaki N."/>
            <person name="Naruo K."/>
            <person name="Okumura S."/>
            <person name="Shimpo S."/>
            <person name="Takeuchi C."/>
            <person name="Wada T."/>
            <person name="Watanabe A."/>
            <person name="Yamada M."/>
            <person name="Yasuda M."/>
            <person name="Tabata S."/>
        </authorList>
    </citation>
    <scope>NUCLEOTIDE SEQUENCE [LARGE SCALE GENOMIC DNA]</scope>
    <source>
        <strain>ATCC 27184 / PCC 6803 / Kazusa</strain>
    </source>
</reference>
<reference key="2">
    <citation type="journal article" date="2005" name="J. Biol. Chem.">
        <title>Identification of NdhL and Ssl1690 (NdhO) in NDH-1L and NDH-1M complexes of Synechocystis sp. PCC 6803.</title>
        <authorList>
            <person name="Battchikova N."/>
            <person name="Zhang P."/>
            <person name="Rudd S."/>
            <person name="Ogawa T."/>
            <person name="Aro E.-M."/>
        </authorList>
    </citation>
    <scope>PROTEIN SEQUENCE OF 16-64</scope>
    <scope>CHARACTERIZATION AS A MEMBER OF THE NAD(P)H-QUINONE OXIDOREDUCTASE COMPLEX</scope>
    <scope>SUBCOMPLEXES OF NDH-1</scope>
</reference>
<reference key="3">
    <citation type="journal article" date="2005" name="Proteomics">
        <title>Proteomic studies of the thylakoid membrane of Synechocystis sp. PCC 6803.</title>
        <authorList>
            <person name="Srivastava R."/>
            <person name="Pisareva T."/>
            <person name="Norling B."/>
        </authorList>
    </citation>
    <scope>SUBCELLULAR LOCATION</scope>
</reference>
<gene>
    <name type="primary">ndhO</name>
    <name type="ordered locus">ssl1690</name>
</gene>
<feature type="chain" id="PRO_0000353662" description="NAD(P)H-quinone oxidoreductase subunit O">
    <location>
        <begin position="1"/>
        <end position="72"/>
    </location>
</feature>
<name>NDHO_SYNY3</name>
<accession>P74771</accession>
<proteinExistence type="evidence at protein level"/>
<protein>
    <recommendedName>
        <fullName>NAD(P)H-quinone oxidoreductase subunit O</fullName>
        <ecNumber>7.1.1.-</ecNumber>
    </recommendedName>
    <alternativeName>
        <fullName>NAD(P)H dehydrogenase I subunit O</fullName>
    </alternativeName>
    <alternativeName>
        <fullName>NDH-1 subunit O</fullName>
    </alternativeName>
    <alternativeName>
        <fullName>NDH-O</fullName>
    </alternativeName>
</protein>
<keyword id="KW-0903">Direct protein sequencing</keyword>
<keyword id="KW-0472">Membrane</keyword>
<keyword id="KW-0520">NAD</keyword>
<keyword id="KW-0521">NADP</keyword>
<keyword id="KW-0618">Plastoquinone</keyword>
<keyword id="KW-0874">Quinone</keyword>
<keyword id="KW-1185">Reference proteome</keyword>
<keyword id="KW-0793">Thylakoid</keyword>
<keyword id="KW-1278">Translocase</keyword>
<keyword id="KW-0813">Transport</keyword>
<comment type="function">
    <text evidence="1">NDH-1 shuttles electrons from an unknown electron donor, via FMN and iron-sulfur (Fe-S) centers, to quinones in the respiratory and/or the photosynthetic chain. The immediate electron acceptor for the enzyme in this species is believed to be plastoquinone. Couples the redox reaction to proton translocation, and thus conserves the redox energy in a proton gradient. Cyanobacterial NDH-1 also plays a role in inorganic carbon-concentration (By similarity).</text>
</comment>
<comment type="catalytic activity">
    <reaction>
        <text>a plastoquinone + NADH + (n+1) H(+)(in) = a plastoquinol + NAD(+) + n H(+)(out)</text>
        <dbReference type="Rhea" id="RHEA:42608"/>
        <dbReference type="Rhea" id="RHEA-COMP:9561"/>
        <dbReference type="Rhea" id="RHEA-COMP:9562"/>
        <dbReference type="ChEBI" id="CHEBI:15378"/>
        <dbReference type="ChEBI" id="CHEBI:17757"/>
        <dbReference type="ChEBI" id="CHEBI:57540"/>
        <dbReference type="ChEBI" id="CHEBI:57945"/>
        <dbReference type="ChEBI" id="CHEBI:62192"/>
    </reaction>
</comment>
<comment type="catalytic activity">
    <reaction>
        <text>a plastoquinone + NADPH + (n+1) H(+)(in) = a plastoquinol + NADP(+) + n H(+)(out)</text>
        <dbReference type="Rhea" id="RHEA:42612"/>
        <dbReference type="Rhea" id="RHEA-COMP:9561"/>
        <dbReference type="Rhea" id="RHEA-COMP:9562"/>
        <dbReference type="ChEBI" id="CHEBI:15378"/>
        <dbReference type="ChEBI" id="CHEBI:17757"/>
        <dbReference type="ChEBI" id="CHEBI:57783"/>
        <dbReference type="ChEBI" id="CHEBI:58349"/>
        <dbReference type="ChEBI" id="CHEBI:62192"/>
    </reaction>
</comment>
<comment type="subunit">
    <text>NDH-1 can be composed of about 15 different subunits; different subcomplexes with different compositions have been identified which probably have different functions.</text>
</comment>
<comment type="subcellular location">
    <subcellularLocation>
        <location evidence="3">Cellular thylakoid membrane</location>
        <topology evidence="3">Peripheral membrane protein</topology>
        <orientation evidence="3">Cytoplasmic side</orientation>
    </subcellularLocation>
</comment>
<comment type="similarity">
    <text evidence="2">Belongs to the complex I NdhO subunit family.</text>
</comment>
<evidence type="ECO:0000250" key="1"/>
<evidence type="ECO:0000305" key="2"/>
<evidence type="ECO:0000305" key="3">
    <source>
    </source>
</evidence>